<accession>Q04V64</accession>
<organism>
    <name type="scientific">Leptospira borgpetersenii serovar Hardjo-bovis (strain JB197)</name>
    <dbReference type="NCBI Taxonomy" id="355277"/>
    <lineage>
        <taxon>Bacteria</taxon>
        <taxon>Pseudomonadati</taxon>
        <taxon>Spirochaetota</taxon>
        <taxon>Spirochaetia</taxon>
        <taxon>Leptospirales</taxon>
        <taxon>Leptospiraceae</taxon>
        <taxon>Leptospira</taxon>
    </lineage>
</organism>
<feature type="chain" id="PRO_0000390109" description="NADH-quinone oxidoreductase subunit K">
    <location>
        <begin position="1"/>
        <end position="106"/>
    </location>
</feature>
<feature type="transmembrane region" description="Helical" evidence="1">
    <location>
        <begin position="10"/>
        <end position="30"/>
    </location>
</feature>
<feature type="transmembrane region" description="Helical" evidence="1">
    <location>
        <begin position="35"/>
        <end position="55"/>
    </location>
</feature>
<feature type="transmembrane region" description="Helical" evidence="1">
    <location>
        <begin position="67"/>
        <end position="87"/>
    </location>
</feature>
<dbReference type="EC" id="7.1.1.-" evidence="1"/>
<dbReference type="EMBL" id="CP000350">
    <property type="protein sequence ID" value="ABJ75206.1"/>
    <property type="molecule type" value="Genomic_DNA"/>
</dbReference>
<dbReference type="RefSeq" id="WP_002723753.1">
    <property type="nucleotide sequence ID" value="NC_008510.1"/>
</dbReference>
<dbReference type="SMR" id="Q04V64"/>
<dbReference type="GeneID" id="61172706"/>
<dbReference type="KEGG" id="lbj:LBJ_0509"/>
<dbReference type="HOGENOM" id="CLU_144724_0_0_12"/>
<dbReference type="Proteomes" id="UP000000656">
    <property type="component" value="Chromosome 1"/>
</dbReference>
<dbReference type="GO" id="GO:0030964">
    <property type="term" value="C:NADH dehydrogenase complex"/>
    <property type="evidence" value="ECO:0007669"/>
    <property type="project" value="TreeGrafter"/>
</dbReference>
<dbReference type="GO" id="GO:0005886">
    <property type="term" value="C:plasma membrane"/>
    <property type="evidence" value="ECO:0007669"/>
    <property type="project" value="UniProtKB-SubCell"/>
</dbReference>
<dbReference type="GO" id="GO:0050136">
    <property type="term" value="F:NADH:ubiquinone reductase (non-electrogenic) activity"/>
    <property type="evidence" value="ECO:0007669"/>
    <property type="project" value="UniProtKB-UniRule"/>
</dbReference>
<dbReference type="GO" id="GO:0048038">
    <property type="term" value="F:quinone binding"/>
    <property type="evidence" value="ECO:0007669"/>
    <property type="project" value="UniProtKB-KW"/>
</dbReference>
<dbReference type="GO" id="GO:0042773">
    <property type="term" value="P:ATP synthesis coupled electron transport"/>
    <property type="evidence" value="ECO:0007669"/>
    <property type="project" value="InterPro"/>
</dbReference>
<dbReference type="FunFam" id="1.10.287.3510:FF:000001">
    <property type="entry name" value="NADH-quinone oxidoreductase subunit K"/>
    <property type="match status" value="1"/>
</dbReference>
<dbReference type="Gene3D" id="1.10.287.3510">
    <property type="match status" value="1"/>
</dbReference>
<dbReference type="HAMAP" id="MF_01456">
    <property type="entry name" value="NDH1_NuoK"/>
    <property type="match status" value="1"/>
</dbReference>
<dbReference type="InterPro" id="IPR001133">
    <property type="entry name" value="NADH_UbQ_OxRdtase_chain4L/K"/>
</dbReference>
<dbReference type="InterPro" id="IPR039428">
    <property type="entry name" value="NUOK/Mnh_C1-like"/>
</dbReference>
<dbReference type="NCBIfam" id="NF004320">
    <property type="entry name" value="PRK05715.1-2"/>
    <property type="match status" value="1"/>
</dbReference>
<dbReference type="PANTHER" id="PTHR11434:SF21">
    <property type="entry name" value="NADH DEHYDROGENASE SUBUNIT 4L-RELATED"/>
    <property type="match status" value="1"/>
</dbReference>
<dbReference type="PANTHER" id="PTHR11434">
    <property type="entry name" value="NADH-UBIQUINONE OXIDOREDUCTASE SUBUNIT ND4L"/>
    <property type="match status" value="1"/>
</dbReference>
<dbReference type="Pfam" id="PF00420">
    <property type="entry name" value="Oxidored_q2"/>
    <property type="match status" value="1"/>
</dbReference>
<comment type="function">
    <text evidence="1">NDH-1 shuttles electrons from NADH, via FMN and iron-sulfur (Fe-S) centers, to quinones in the respiratory chain. The immediate electron acceptor for the enzyme in this species is believed to be ubiquinone. Couples the redox reaction to proton translocation (for every two electrons transferred, four hydrogen ions are translocated across the cytoplasmic membrane), and thus conserves the redox energy in a proton gradient.</text>
</comment>
<comment type="catalytic activity">
    <reaction evidence="1">
        <text>a quinone + NADH + 5 H(+)(in) = a quinol + NAD(+) + 4 H(+)(out)</text>
        <dbReference type="Rhea" id="RHEA:57888"/>
        <dbReference type="ChEBI" id="CHEBI:15378"/>
        <dbReference type="ChEBI" id="CHEBI:24646"/>
        <dbReference type="ChEBI" id="CHEBI:57540"/>
        <dbReference type="ChEBI" id="CHEBI:57945"/>
        <dbReference type="ChEBI" id="CHEBI:132124"/>
    </reaction>
</comment>
<comment type="subunit">
    <text evidence="1">NDH-1 is composed of 14 different subunits. Subunits NuoA, H, J, K, L, M, N constitute the membrane sector of the complex.</text>
</comment>
<comment type="subcellular location">
    <subcellularLocation>
        <location evidence="1">Cell inner membrane</location>
        <topology evidence="1">Multi-pass membrane protein</topology>
    </subcellularLocation>
</comment>
<comment type="similarity">
    <text evidence="1">Belongs to the complex I subunit 4L family.</text>
</comment>
<protein>
    <recommendedName>
        <fullName evidence="1">NADH-quinone oxidoreductase subunit K</fullName>
        <ecNumber evidence="1">7.1.1.-</ecNumber>
    </recommendedName>
    <alternativeName>
        <fullName evidence="1">NADH dehydrogenase I subunit K</fullName>
    </alternativeName>
    <alternativeName>
        <fullName evidence="1">NDH-1 subunit K</fullName>
    </alternativeName>
</protein>
<evidence type="ECO:0000255" key="1">
    <source>
        <dbReference type="HAMAP-Rule" id="MF_01456"/>
    </source>
</evidence>
<gene>
    <name evidence="1" type="primary">nuoK</name>
    <name type="ordered locus">LBJ_0509</name>
</gene>
<proteinExistence type="inferred from homology"/>
<sequence>MSLWISGIPIHYYLILAMIIFTIGVAGVMVRRSAVLIFMSVELILNSVNLVFVTFSKALYQVDGEVVVFFVMAIAAAEAAIGLAIVIAIHRIKKTSYVDEMNLMKW</sequence>
<name>NUOK_LEPBJ</name>
<reference key="1">
    <citation type="journal article" date="2006" name="Proc. Natl. Acad. Sci. U.S.A.">
        <title>Genome reduction in Leptospira borgpetersenii reflects limited transmission potential.</title>
        <authorList>
            <person name="Bulach D.M."/>
            <person name="Zuerner R.L."/>
            <person name="Wilson P."/>
            <person name="Seemann T."/>
            <person name="McGrath A."/>
            <person name="Cullen P.A."/>
            <person name="Davis J."/>
            <person name="Johnson M."/>
            <person name="Kuczek E."/>
            <person name="Alt D.P."/>
            <person name="Peterson-Burch B."/>
            <person name="Coppel R.L."/>
            <person name="Rood J.I."/>
            <person name="Davies J.K."/>
            <person name="Adler B."/>
        </authorList>
    </citation>
    <scope>NUCLEOTIDE SEQUENCE [LARGE SCALE GENOMIC DNA]</scope>
    <source>
        <strain>JB197</strain>
    </source>
</reference>
<keyword id="KW-0997">Cell inner membrane</keyword>
<keyword id="KW-1003">Cell membrane</keyword>
<keyword id="KW-0472">Membrane</keyword>
<keyword id="KW-0520">NAD</keyword>
<keyword id="KW-0874">Quinone</keyword>
<keyword id="KW-1278">Translocase</keyword>
<keyword id="KW-0812">Transmembrane</keyword>
<keyword id="KW-1133">Transmembrane helix</keyword>
<keyword id="KW-0813">Transport</keyword>
<keyword id="KW-0830">Ubiquinone</keyword>